<keyword id="KW-0012">Acyltransferase</keyword>
<keyword id="KW-0963">Cytoplasm</keyword>
<keyword id="KW-0441">Lipid A biosynthesis</keyword>
<keyword id="KW-0444">Lipid biosynthesis</keyword>
<keyword id="KW-0443">Lipid metabolism</keyword>
<keyword id="KW-0677">Repeat</keyword>
<keyword id="KW-0808">Transferase</keyword>
<feature type="chain" id="PRO_1000190867" description="Acyl-[acyl-carrier-protein]--UDP-N-acetylglucosamine O-acyltransferase">
    <location>
        <begin position="1"/>
        <end position="263"/>
    </location>
</feature>
<organism>
    <name type="scientific">Xanthomonas campestris pv. campestris (strain B100)</name>
    <dbReference type="NCBI Taxonomy" id="509169"/>
    <lineage>
        <taxon>Bacteria</taxon>
        <taxon>Pseudomonadati</taxon>
        <taxon>Pseudomonadota</taxon>
        <taxon>Gammaproteobacteria</taxon>
        <taxon>Lysobacterales</taxon>
        <taxon>Lysobacteraceae</taxon>
        <taxon>Xanthomonas</taxon>
    </lineage>
</organism>
<evidence type="ECO:0000255" key="1">
    <source>
        <dbReference type="HAMAP-Rule" id="MF_00387"/>
    </source>
</evidence>
<dbReference type="EC" id="2.3.1.129" evidence="1"/>
<dbReference type="EMBL" id="AM920689">
    <property type="protein sequence ID" value="CAP52296.1"/>
    <property type="molecule type" value="Genomic_DNA"/>
</dbReference>
<dbReference type="SMR" id="B0RW78"/>
<dbReference type="KEGG" id="xca:xcc-b100_2935"/>
<dbReference type="HOGENOM" id="CLU_061249_0_0_6"/>
<dbReference type="UniPathway" id="UPA00359">
    <property type="reaction ID" value="UER00477"/>
</dbReference>
<dbReference type="Proteomes" id="UP000001188">
    <property type="component" value="Chromosome"/>
</dbReference>
<dbReference type="GO" id="GO:0005737">
    <property type="term" value="C:cytoplasm"/>
    <property type="evidence" value="ECO:0007669"/>
    <property type="project" value="UniProtKB-SubCell"/>
</dbReference>
<dbReference type="GO" id="GO:0016020">
    <property type="term" value="C:membrane"/>
    <property type="evidence" value="ECO:0007669"/>
    <property type="project" value="GOC"/>
</dbReference>
<dbReference type="GO" id="GO:0008780">
    <property type="term" value="F:acyl-[acyl-carrier-protein]-UDP-N-acetylglucosamine O-acyltransferase activity"/>
    <property type="evidence" value="ECO:0007669"/>
    <property type="project" value="UniProtKB-UniRule"/>
</dbReference>
<dbReference type="GO" id="GO:0009245">
    <property type="term" value="P:lipid A biosynthetic process"/>
    <property type="evidence" value="ECO:0007669"/>
    <property type="project" value="UniProtKB-UniRule"/>
</dbReference>
<dbReference type="CDD" id="cd03351">
    <property type="entry name" value="LbH_UDP-GlcNAc_AT"/>
    <property type="match status" value="1"/>
</dbReference>
<dbReference type="Gene3D" id="2.160.10.10">
    <property type="entry name" value="Hexapeptide repeat proteins"/>
    <property type="match status" value="1"/>
</dbReference>
<dbReference type="Gene3D" id="1.20.1180.10">
    <property type="entry name" value="Udp N-acetylglucosamine O-acyltransferase, C-terminal domain"/>
    <property type="match status" value="1"/>
</dbReference>
<dbReference type="HAMAP" id="MF_00387">
    <property type="entry name" value="LpxA"/>
    <property type="match status" value="1"/>
</dbReference>
<dbReference type="InterPro" id="IPR029098">
    <property type="entry name" value="Acetyltransf_C"/>
</dbReference>
<dbReference type="InterPro" id="IPR037157">
    <property type="entry name" value="Acetyltransf_C_sf"/>
</dbReference>
<dbReference type="InterPro" id="IPR001451">
    <property type="entry name" value="Hexapep"/>
</dbReference>
<dbReference type="InterPro" id="IPR010137">
    <property type="entry name" value="Lipid_A_LpxA"/>
</dbReference>
<dbReference type="InterPro" id="IPR011004">
    <property type="entry name" value="Trimer_LpxA-like_sf"/>
</dbReference>
<dbReference type="NCBIfam" id="TIGR01852">
    <property type="entry name" value="lipid_A_lpxA"/>
    <property type="match status" value="1"/>
</dbReference>
<dbReference type="NCBIfam" id="NF003657">
    <property type="entry name" value="PRK05289.1"/>
    <property type="match status" value="1"/>
</dbReference>
<dbReference type="PANTHER" id="PTHR43480">
    <property type="entry name" value="ACYL-[ACYL-CARRIER-PROTEIN]--UDP-N-ACETYLGLUCOSAMINE O-ACYLTRANSFERASE"/>
    <property type="match status" value="1"/>
</dbReference>
<dbReference type="PANTHER" id="PTHR43480:SF1">
    <property type="entry name" value="ACYL-[ACYL-CARRIER-PROTEIN]--UDP-N-ACETYLGLUCOSAMINE O-ACYLTRANSFERASE, MITOCHONDRIAL-RELATED"/>
    <property type="match status" value="1"/>
</dbReference>
<dbReference type="Pfam" id="PF13720">
    <property type="entry name" value="Acetyltransf_11"/>
    <property type="match status" value="1"/>
</dbReference>
<dbReference type="Pfam" id="PF00132">
    <property type="entry name" value="Hexapep"/>
    <property type="match status" value="1"/>
</dbReference>
<dbReference type="PIRSF" id="PIRSF000456">
    <property type="entry name" value="UDP-GlcNAc_acltr"/>
    <property type="match status" value="1"/>
</dbReference>
<dbReference type="SUPFAM" id="SSF51161">
    <property type="entry name" value="Trimeric LpxA-like enzymes"/>
    <property type="match status" value="1"/>
</dbReference>
<sequence length="263" mass="27842">MRDQAPLIHPTAVIDPAARLASDVRVGAFSLIGADVEIGAGTEVGPHCSIHGPTRIGSNNRFIGHAAIGGEPQDKKYAGERTELVIGNGNVIREFVTINRGTGGGGGITVVGDDNWMLAYTHVAHDCHVGNHCVFSNNTTLAGHVTVGDYVIISGFAGAHQFCRIGAHAFLGMGALTNGDVPPFTMVGSDSLGRPRGINSEGLKRRGFDAERISAIKRAYRTLYVAGLPLAEAKLQLAEQARDSDDVRGLLEFIEAAERPLLR</sequence>
<comment type="function">
    <text evidence="1">Involved in the biosynthesis of lipid A, a phosphorylated glycolipid that anchors the lipopolysaccharide to the outer membrane of the cell.</text>
</comment>
<comment type="catalytic activity">
    <reaction evidence="1">
        <text>a (3R)-hydroxyacyl-[ACP] + UDP-N-acetyl-alpha-D-glucosamine = a UDP-3-O-[(3R)-3-hydroxyacyl]-N-acetyl-alpha-D-glucosamine + holo-[ACP]</text>
        <dbReference type="Rhea" id="RHEA:67812"/>
        <dbReference type="Rhea" id="RHEA-COMP:9685"/>
        <dbReference type="Rhea" id="RHEA-COMP:9945"/>
        <dbReference type="ChEBI" id="CHEBI:57705"/>
        <dbReference type="ChEBI" id="CHEBI:64479"/>
        <dbReference type="ChEBI" id="CHEBI:78827"/>
        <dbReference type="ChEBI" id="CHEBI:173225"/>
        <dbReference type="EC" id="2.3.1.129"/>
    </reaction>
</comment>
<comment type="pathway">
    <text evidence="1">Glycolipid biosynthesis; lipid IV(A) biosynthesis; lipid IV(A) from (3R)-3-hydroxytetradecanoyl-[acyl-carrier-protein] and UDP-N-acetyl-alpha-D-glucosamine: step 1/6.</text>
</comment>
<comment type="subunit">
    <text evidence="1">Homotrimer.</text>
</comment>
<comment type="subcellular location">
    <subcellularLocation>
        <location evidence="1">Cytoplasm</location>
    </subcellularLocation>
</comment>
<comment type="similarity">
    <text evidence="1">Belongs to the transferase hexapeptide repeat family. LpxA subfamily.</text>
</comment>
<reference key="1">
    <citation type="journal article" date="2008" name="J. Biotechnol.">
        <title>The genome of Xanthomonas campestris pv. campestris B100 and its use for the reconstruction of metabolic pathways involved in xanthan biosynthesis.</title>
        <authorList>
            <person name="Vorhoelter F.-J."/>
            <person name="Schneiker S."/>
            <person name="Goesmann A."/>
            <person name="Krause L."/>
            <person name="Bekel T."/>
            <person name="Kaiser O."/>
            <person name="Linke B."/>
            <person name="Patschkowski T."/>
            <person name="Rueckert C."/>
            <person name="Schmid J."/>
            <person name="Sidhu V.K."/>
            <person name="Sieber V."/>
            <person name="Tauch A."/>
            <person name="Watt S.A."/>
            <person name="Weisshaar B."/>
            <person name="Becker A."/>
            <person name="Niehaus K."/>
            <person name="Puehler A."/>
        </authorList>
    </citation>
    <scope>NUCLEOTIDE SEQUENCE [LARGE SCALE GENOMIC DNA]</scope>
    <source>
        <strain>B100</strain>
    </source>
</reference>
<protein>
    <recommendedName>
        <fullName evidence="1">Acyl-[acyl-carrier-protein]--UDP-N-acetylglucosamine O-acyltransferase</fullName>
        <shortName evidence="1">UDP-N-acetylglucosamine acyltransferase</shortName>
        <ecNumber evidence="1">2.3.1.129</ecNumber>
    </recommendedName>
</protein>
<name>LPXA_XANCB</name>
<gene>
    <name evidence="1" type="primary">lpxA</name>
    <name type="ordered locus">xcc-b100_2935</name>
</gene>
<proteinExistence type="inferred from homology"/>
<accession>B0RW78</accession>